<name>RS3_STAHJ</name>
<protein>
    <recommendedName>
        <fullName evidence="1">Small ribosomal subunit protein uS3</fullName>
    </recommendedName>
    <alternativeName>
        <fullName evidence="2">30S ribosomal protein S3</fullName>
    </alternativeName>
</protein>
<feature type="chain" id="PRO_0000230730" description="Small ribosomal subunit protein uS3">
    <location>
        <begin position="1"/>
        <end position="217"/>
    </location>
</feature>
<feature type="domain" description="KH type-2" evidence="1">
    <location>
        <begin position="38"/>
        <end position="106"/>
    </location>
</feature>
<reference key="1">
    <citation type="journal article" date="2005" name="J. Bacteriol.">
        <title>Whole-genome sequencing of Staphylococcus haemolyticus uncovers the extreme plasticity of its genome and the evolution of human-colonizing staphylococcal species.</title>
        <authorList>
            <person name="Takeuchi F."/>
            <person name="Watanabe S."/>
            <person name="Baba T."/>
            <person name="Yuzawa H."/>
            <person name="Ito T."/>
            <person name="Morimoto Y."/>
            <person name="Kuroda M."/>
            <person name="Cui L."/>
            <person name="Takahashi M."/>
            <person name="Ankai A."/>
            <person name="Baba S."/>
            <person name="Fukui S."/>
            <person name="Lee J.C."/>
            <person name="Hiramatsu K."/>
        </authorList>
    </citation>
    <scope>NUCLEOTIDE SEQUENCE [LARGE SCALE GENOMIC DNA]</scope>
    <source>
        <strain>JCSC1435</strain>
    </source>
</reference>
<accession>Q4L8A8</accession>
<sequence>MGQKINPIGLRVGIIRDWEAKWYAEKDFASLLHEDLRIRKFIDNELKEASVSHVEIERAANRINIAIHTGKPGMVIGKGGSEIEKLRNKLNNLTDKKVHINVIEIKKIDIDARLVAENIARQLENRASFRRVQKQAISRAMKLGAKGIKTQVSGRLGGADIARAEQYSEGTVPLHTLRADIDYAHAEADTTYGKLGVKVWIYRGEVLPTKNTSEGGK</sequence>
<evidence type="ECO:0000255" key="1">
    <source>
        <dbReference type="HAMAP-Rule" id="MF_01309"/>
    </source>
</evidence>
<evidence type="ECO:0000305" key="2"/>
<keyword id="KW-0687">Ribonucleoprotein</keyword>
<keyword id="KW-0689">Ribosomal protein</keyword>
<keyword id="KW-0694">RNA-binding</keyword>
<keyword id="KW-0699">rRNA-binding</keyword>
<comment type="function">
    <text evidence="1">Binds the lower part of the 30S subunit head. Binds mRNA in the 70S ribosome, positioning it for translation.</text>
</comment>
<comment type="subunit">
    <text evidence="1">Part of the 30S ribosomal subunit. Forms a tight complex with proteins S10 and S14.</text>
</comment>
<comment type="similarity">
    <text evidence="1">Belongs to the universal ribosomal protein uS3 family.</text>
</comment>
<proteinExistence type="inferred from homology"/>
<gene>
    <name evidence="1" type="primary">rpsC</name>
    <name type="ordered locus">SH0808</name>
</gene>
<organism>
    <name type="scientific">Staphylococcus haemolyticus (strain JCSC1435)</name>
    <dbReference type="NCBI Taxonomy" id="279808"/>
    <lineage>
        <taxon>Bacteria</taxon>
        <taxon>Bacillati</taxon>
        <taxon>Bacillota</taxon>
        <taxon>Bacilli</taxon>
        <taxon>Bacillales</taxon>
        <taxon>Staphylococcaceae</taxon>
        <taxon>Staphylococcus</taxon>
    </lineage>
</organism>
<dbReference type="EMBL" id="AP006716">
    <property type="protein sequence ID" value="BAE04117.1"/>
    <property type="molecule type" value="Genomic_DNA"/>
</dbReference>
<dbReference type="RefSeq" id="WP_011275129.1">
    <property type="nucleotide sequence ID" value="NC_007168.1"/>
</dbReference>
<dbReference type="SMR" id="Q4L8A8"/>
<dbReference type="GeneID" id="93780197"/>
<dbReference type="KEGG" id="sha:SH0808"/>
<dbReference type="eggNOG" id="COG0092">
    <property type="taxonomic scope" value="Bacteria"/>
</dbReference>
<dbReference type="HOGENOM" id="CLU_058591_0_2_9"/>
<dbReference type="OrthoDB" id="9806396at2"/>
<dbReference type="Proteomes" id="UP000000543">
    <property type="component" value="Chromosome"/>
</dbReference>
<dbReference type="GO" id="GO:0022627">
    <property type="term" value="C:cytosolic small ribosomal subunit"/>
    <property type="evidence" value="ECO:0007669"/>
    <property type="project" value="TreeGrafter"/>
</dbReference>
<dbReference type="GO" id="GO:0003729">
    <property type="term" value="F:mRNA binding"/>
    <property type="evidence" value="ECO:0007669"/>
    <property type="project" value="UniProtKB-UniRule"/>
</dbReference>
<dbReference type="GO" id="GO:0019843">
    <property type="term" value="F:rRNA binding"/>
    <property type="evidence" value="ECO:0007669"/>
    <property type="project" value="UniProtKB-UniRule"/>
</dbReference>
<dbReference type="GO" id="GO:0003735">
    <property type="term" value="F:structural constituent of ribosome"/>
    <property type="evidence" value="ECO:0007669"/>
    <property type="project" value="InterPro"/>
</dbReference>
<dbReference type="GO" id="GO:0006412">
    <property type="term" value="P:translation"/>
    <property type="evidence" value="ECO:0007669"/>
    <property type="project" value="UniProtKB-UniRule"/>
</dbReference>
<dbReference type="CDD" id="cd02412">
    <property type="entry name" value="KH-II_30S_S3"/>
    <property type="match status" value="1"/>
</dbReference>
<dbReference type="FunFam" id="3.30.1140.32:FF:000001">
    <property type="entry name" value="30S ribosomal protein S3"/>
    <property type="match status" value="1"/>
</dbReference>
<dbReference type="FunFam" id="3.30.300.20:FF:000001">
    <property type="entry name" value="30S ribosomal protein S3"/>
    <property type="match status" value="1"/>
</dbReference>
<dbReference type="Gene3D" id="3.30.300.20">
    <property type="match status" value="1"/>
</dbReference>
<dbReference type="Gene3D" id="3.30.1140.32">
    <property type="entry name" value="Ribosomal protein S3, C-terminal domain"/>
    <property type="match status" value="1"/>
</dbReference>
<dbReference type="HAMAP" id="MF_01309_B">
    <property type="entry name" value="Ribosomal_uS3_B"/>
    <property type="match status" value="1"/>
</dbReference>
<dbReference type="InterPro" id="IPR004087">
    <property type="entry name" value="KH_dom"/>
</dbReference>
<dbReference type="InterPro" id="IPR015946">
    <property type="entry name" value="KH_dom-like_a/b"/>
</dbReference>
<dbReference type="InterPro" id="IPR004044">
    <property type="entry name" value="KH_dom_type_2"/>
</dbReference>
<dbReference type="InterPro" id="IPR009019">
    <property type="entry name" value="KH_sf_prok-type"/>
</dbReference>
<dbReference type="InterPro" id="IPR036419">
    <property type="entry name" value="Ribosomal_S3_C_sf"/>
</dbReference>
<dbReference type="InterPro" id="IPR005704">
    <property type="entry name" value="Ribosomal_uS3_bac-typ"/>
</dbReference>
<dbReference type="InterPro" id="IPR001351">
    <property type="entry name" value="Ribosomal_uS3_C"/>
</dbReference>
<dbReference type="InterPro" id="IPR018280">
    <property type="entry name" value="Ribosomal_uS3_CS"/>
</dbReference>
<dbReference type="NCBIfam" id="TIGR01009">
    <property type="entry name" value="rpsC_bact"/>
    <property type="match status" value="1"/>
</dbReference>
<dbReference type="PANTHER" id="PTHR11760">
    <property type="entry name" value="30S/40S RIBOSOMAL PROTEIN S3"/>
    <property type="match status" value="1"/>
</dbReference>
<dbReference type="PANTHER" id="PTHR11760:SF19">
    <property type="entry name" value="SMALL RIBOSOMAL SUBUNIT PROTEIN US3C"/>
    <property type="match status" value="1"/>
</dbReference>
<dbReference type="Pfam" id="PF07650">
    <property type="entry name" value="KH_2"/>
    <property type="match status" value="1"/>
</dbReference>
<dbReference type="Pfam" id="PF00189">
    <property type="entry name" value="Ribosomal_S3_C"/>
    <property type="match status" value="1"/>
</dbReference>
<dbReference type="SMART" id="SM00322">
    <property type="entry name" value="KH"/>
    <property type="match status" value="1"/>
</dbReference>
<dbReference type="SUPFAM" id="SSF54814">
    <property type="entry name" value="Prokaryotic type KH domain (KH-domain type II)"/>
    <property type="match status" value="1"/>
</dbReference>
<dbReference type="SUPFAM" id="SSF54821">
    <property type="entry name" value="Ribosomal protein S3 C-terminal domain"/>
    <property type="match status" value="1"/>
</dbReference>
<dbReference type="PROSITE" id="PS50823">
    <property type="entry name" value="KH_TYPE_2"/>
    <property type="match status" value="1"/>
</dbReference>
<dbReference type="PROSITE" id="PS00548">
    <property type="entry name" value="RIBOSOMAL_S3"/>
    <property type="match status" value="1"/>
</dbReference>